<keyword id="KW-0963">Cytoplasm</keyword>
<keyword id="KW-0378">Hydrolase</keyword>
<keyword id="KW-0479">Metal-binding</keyword>
<keyword id="KW-0533">Nickel</keyword>
<keyword id="KW-0614">Plasmid</keyword>
<keyword id="KW-1185">Reference proteome</keyword>
<evidence type="ECO:0000255" key="1">
    <source>
        <dbReference type="HAMAP-Rule" id="MF_01953"/>
    </source>
</evidence>
<feature type="chain" id="PRO_0000234193" description="Urease subunit alpha">
    <location>
        <begin position="1"/>
        <end position="568"/>
    </location>
</feature>
<feature type="domain" description="Urease" evidence="1">
    <location>
        <begin position="133"/>
        <end position="568"/>
    </location>
</feature>
<feature type="active site" description="Proton donor" evidence="1">
    <location>
        <position position="320"/>
    </location>
</feature>
<feature type="binding site" evidence="1">
    <location>
        <position position="138"/>
    </location>
    <ligand>
        <name>Ni(2+)</name>
        <dbReference type="ChEBI" id="CHEBI:49786"/>
        <label>1</label>
    </ligand>
</feature>
<feature type="binding site" evidence="1">
    <location>
        <position position="140"/>
    </location>
    <ligand>
        <name>Ni(2+)</name>
        <dbReference type="ChEBI" id="CHEBI:49786"/>
        <label>1</label>
    </ligand>
</feature>
<feature type="binding site" description="via carbamate group" evidence="1">
    <location>
        <position position="217"/>
    </location>
    <ligand>
        <name>Ni(2+)</name>
        <dbReference type="ChEBI" id="CHEBI:49786"/>
        <label>1</label>
    </ligand>
</feature>
<feature type="binding site" description="via carbamate group" evidence="1">
    <location>
        <position position="217"/>
    </location>
    <ligand>
        <name>Ni(2+)</name>
        <dbReference type="ChEBI" id="CHEBI:49786"/>
        <label>2</label>
    </ligand>
</feature>
<feature type="binding site" evidence="1">
    <location>
        <position position="219"/>
    </location>
    <ligand>
        <name>substrate</name>
    </ligand>
</feature>
<feature type="binding site" evidence="1">
    <location>
        <position position="246"/>
    </location>
    <ligand>
        <name>Ni(2+)</name>
        <dbReference type="ChEBI" id="CHEBI:49786"/>
        <label>2</label>
    </ligand>
</feature>
<feature type="binding site" evidence="1">
    <location>
        <position position="272"/>
    </location>
    <ligand>
        <name>Ni(2+)</name>
        <dbReference type="ChEBI" id="CHEBI:49786"/>
        <label>2</label>
    </ligand>
</feature>
<feature type="binding site" evidence="1">
    <location>
        <position position="360"/>
    </location>
    <ligand>
        <name>Ni(2+)</name>
        <dbReference type="ChEBI" id="CHEBI:49786"/>
        <label>1</label>
    </ligand>
</feature>
<feature type="modified residue" description="N6-carboxylysine" evidence="1">
    <location>
        <position position="217"/>
    </location>
</feature>
<dbReference type="EC" id="3.5.1.5" evidence="1"/>
<dbReference type="EMBL" id="AB119092">
    <property type="protein sequence ID" value="BAC84958.1"/>
    <property type="molecule type" value="Genomic_DNA"/>
</dbReference>
<dbReference type="EMBL" id="AY596296">
    <property type="protein sequence ID" value="AAV44835.1"/>
    <property type="molecule type" value="Genomic_DNA"/>
</dbReference>
<dbReference type="RefSeq" id="WP_011222586.1">
    <property type="nucleotide sequence ID" value="NC_006395.1"/>
</dbReference>
<dbReference type="SMR" id="Q75ZQ5"/>
<dbReference type="MEROPS" id="M38.982"/>
<dbReference type="EnsemblBacteria" id="AAV44835">
    <property type="protein sequence ID" value="AAV44835"/>
    <property type="gene ID" value="pNG7124"/>
</dbReference>
<dbReference type="GeneID" id="40151396"/>
<dbReference type="KEGG" id="hma:pNG7124"/>
<dbReference type="PATRIC" id="fig|272569.17.peg.567"/>
<dbReference type="HOGENOM" id="CLU_000980_0_0_2"/>
<dbReference type="BRENDA" id="3.5.1.5">
    <property type="organism ID" value="2549"/>
</dbReference>
<dbReference type="UniPathway" id="UPA00258">
    <property type="reaction ID" value="UER00370"/>
</dbReference>
<dbReference type="Proteomes" id="UP000001169">
    <property type="component" value="Plasmid pNG700"/>
</dbReference>
<dbReference type="GO" id="GO:0005737">
    <property type="term" value="C:cytoplasm"/>
    <property type="evidence" value="ECO:0007669"/>
    <property type="project" value="UniProtKB-SubCell"/>
</dbReference>
<dbReference type="GO" id="GO:0016151">
    <property type="term" value="F:nickel cation binding"/>
    <property type="evidence" value="ECO:0007669"/>
    <property type="project" value="UniProtKB-UniRule"/>
</dbReference>
<dbReference type="GO" id="GO:0009039">
    <property type="term" value="F:urease activity"/>
    <property type="evidence" value="ECO:0007669"/>
    <property type="project" value="UniProtKB-UniRule"/>
</dbReference>
<dbReference type="GO" id="GO:0043419">
    <property type="term" value="P:urea catabolic process"/>
    <property type="evidence" value="ECO:0007669"/>
    <property type="project" value="UniProtKB-UniRule"/>
</dbReference>
<dbReference type="CDD" id="cd00375">
    <property type="entry name" value="Urease_alpha"/>
    <property type="match status" value="1"/>
</dbReference>
<dbReference type="Gene3D" id="3.20.20.140">
    <property type="entry name" value="Metal-dependent hydrolases"/>
    <property type="match status" value="1"/>
</dbReference>
<dbReference type="Gene3D" id="2.30.40.10">
    <property type="entry name" value="Urease, subunit C, domain 1"/>
    <property type="match status" value="1"/>
</dbReference>
<dbReference type="HAMAP" id="MF_01953">
    <property type="entry name" value="Urease_alpha"/>
    <property type="match status" value="1"/>
</dbReference>
<dbReference type="InterPro" id="IPR006680">
    <property type="entry name" value="Amidohydro-rel"/>
</dbReference>
<dbReference type="InterPro" id="IPR011059">
    <property type="entry name" value="Metal-dep_hydrolase_composite"/>
</dbReference>
<dbReference type="InterPro" id="IPR032466">
    <property type="entry name" value="Metal_Hydrolase"/>
</dbReference>
<dbReference type="InterPro" id="IPR011612">
    <property type="entry name" value="Urease_alpha_N_dom"/>
</dbReference>
<dbReference type="InterPro" id="IPR050112">
    <property type="entry name" value="Urease_alpha_subunit"/>
</dbReference>
<dbReference type="InterPro" id="IPR017950">
    <property type="entry name" value="Urease_AS"/>
</dbReference>
<dbReference type="InterPro" id="IPR005848">
    <property type="entry name" value="Urease_asu"/>
</dbReference>
<dbReference type="InterPro" id="IPR017951">
    <property type="entry name" value="Urease_asu_c"/>
</dbReference>
<dbReference type="InterPro" id="IPR029754">
    <property type="entry name" value="Urease_Ni-bd"/>
</dbReference>
<dbReference type="NCBIfam" id="NF009686">
    <property type="entry name" value="PRK13207.1"/>
    <property type="match status" value="1"/>
</dbReference>
<dbReference type="NCBIfam" id="TIGR01792">
    <property type="entry name" value="urease_alph"/>
    <property type="match status" value="1"/>
</dbReference>
<dbReference type="PANTHER" id="PTHR43440">
    <property type="entry name" value="UREASE"/>
    <property type="match status" value="1"/>
</dbReference>
<dbReference type="PANTHER" id="PTHR43440:SF1">
    <property type="entry name" value="UREASE"/>
    <property type="match status" value="1"/>
</dbReference>
<dbReference type="Pfam" id="PF01979">
    <property type="entry name" value="Amidohydro_1"/>
    <property type="match status" value="1"/>
</dbReference>
<dbReference type="Pfam" id="PF00449">
    <property type="entry name" value="Urease_alpha"/>
    <property type="match status" value="1"/>
</dbReference>
<dbReference type="PRINTS" id="PR01752">
    <property type="entry name" value="UREASE"/>
</dbReference>
<dbReference type="SUPFAM" id="SSF51338">
    <property type="entry name" value="Composite domain of metallo-dependent hydrolases"/>
    <property type="match status" value="1"/>
</dbReference>
<dbReference type="SUPFAM" id="SSF51556">
    <property type="entry name" value="Metallo-dependent hydrolases"/>
    <property type="match status" value="1"/>
</dbReference>
<dbReference type="PROSITE" id="PS01120">
    <property type="entry name" value="UREASE_1"/>
    <property type="match status" value="1"/>
</dbReference>
<dbReference type="PROSITE" id="PS00145">
    <property type="entry name" value="UREASE_2"/>
    <property type="match status" value="1"/>
</dbReference>
<dbReference type="PROSITE" id="PS51368">
    <property type="entry name" value="UREASE_3"/>
    <property type="match status" value="1"/>
</dbReference>
<organism>
    <name type="scientific">Haloarcula marismortui (strain ATCC 43049 / DSM 3752 / JCM 8966 / VKM B-1809)</name>
    <name type="common">Halobacterium marismortui</name>
    <dbReference type="NCBI Taxonomy" id="272569"/>
    <lineage>
        <taxon>Archaea</taxon>
        <taxon>Methanobacteriati</taxon>
        <taxon>Methanobacteriota</taxon>
        <taxon>Stenosarchaea group</taxon>
        <taxon>Halobacteria</taxon>
        <taxon>Halobacteriales</taxon>
        <taxon>Haloarculaceae</taxon>
        <taxon>Haloarcula</taxon>
    </lineage>
</organism>
<reference key="1">
    <citation type="journal article" date="2004" name="Biosci. Biotechnol. Biochem.">
        <title>Ureases of extreme halophiles of the genus Haloarcula with a unique structure of gene cluster.</title>
        <authorList>
            <person name="Mizuki T."/>
            <person name="Kamekura M."/>
            <person name="DasSarma S."/>
            <person name="Fukushima T."/>
            <person name="Usami R."/>
            <person name="Yoshida Y."/>
            <person name="Horikoshi K."/>
        </authorList>
    </citation>
    <scope>NUCLEOTIDE SEQUENCE [GENOMIC DNA]</scope>
    <source>
        <strain>ATCC 43049 / DSM 3752 / JCM 8966 / VKM B-1809</strain>
    </source>
</reference>
<reference key="2">
    <citation type="journal article" date="2004" name="Genome Res.">
        <title>Genome sequence of Haloarcula marismortui: a halophilic archaeon from the Dead Sea.</title>
        <authorList>
            <person name="Baliga N.S."/>
            <person name="Bonneau R."/>
            <person name="Facciotti M.T."/>
            <person name="Pan M."/>
            <person name="Glusman G."/>
            <person name="Deutsch E.W."/>
            <person name="Shannon P."/>
            <person name="Chiu Y."/>
            <person name="Weng R.S."/>
            <person name="Gan R.R."/>
            <person name="Hung P."/>
            <person name="Date S.V."/>
            <person name="Marcotte E."/>
            <person name="Hood L."/>
            <person name="Ng W.V."/>
        </authorList>
    </citation>
    <scope>NUCLEOTIDE SEQUENCE [LARGE SCALE GENOMIC DNA]</scope>
    <source>
        <strain>ATCC 43049 / DSM 3752 / JCM 8966 / VKM B-1809</strain>
        <plasmid>pNG700</plasmid>
    </source>
</reference>
<accession>Q75ZQ5</accession>
<accession>Q5V6L7</accession>
<geneLocation type="plasmid">
    <name>pNG700</name>
</geneLocation>
<sequence>MTRDIDRENYAELYGPTTGDKVRLGDTELFAKVEEDLRTHGDEAVFGGGKTLRDGLGMAPGVTQAEGALDWVLTNATIIDPILGIVAADIGIRNGEIAGIGKAGNPDTMDGVDMVVGPSTDVYPAEGKIATAGGLDIHIHFNSAQLHEHALSGGITTMLGGGYGGGATTCTTGPENVKRFLQAAEAWPVNVGFYGKGNASDPGPLREQVEAGVCGLKLHEDWGSTPETINTCLEVAEDEDVQVCMHTDTLNEAGFLENTFGAVDGRTMHLFHIEGAGGGHAPDIMEMVGEPNMLPSSTNPSMPYTDNTFDEHLDMVMVCHHLNPDVPEDVAFAESRVRAETIAAEDVLHDMGAISMMTSDSQAMGRIAEVIPRTWQTASKMKSQRGPLPEDEGTGADNHRIKRYIAKYTVNPAISAGIEEHVGTLEPGKLADICLWDPAFFGVKPAMTFKGGFPVHSEMGEANGSLMTCEPILQRERAGAVGKAKHAISLSFVSPAAAEAGIDEEYGLDSRVVPIEGARTPGKDDMVYNSYCPDDIEVDPETFEVRVDGEHVTCEPSSELPLAQRYLL</sequence>
<name>URE1_HALMA</name>
<comment type="catalytic activity">
    <reaction evidence="1">
        <text>urea + 2 H2O + H(+) = hydrogencarbonate + 2 NH4(+)</text>
        <dbReference type="Rhea" id="RHEA:20557"/>
        <dbReference type="ChEBI" id="CHEBI:15377"/>
        <dbReference type="ChEBI" id="CHEBI:15378"/>
        <dbReference type="ChEBI" id="CHEBI:16199"/>
        <dbReference type="ChEBI" id="CHEBI:17544"/>
        <dbReference type="ChEBI" id="CHEBI:28938"/>
        <dbReference type="EC" id="3.5.1.5"/>
    </reaction>
</comment>
<comment type="cofactor">
    <cofactor evidence="1">
        <name>Ni cation</name>
        <dbReference type="ChEBI" id="CHEBI:25516"/>
    </cofactor>
    <text evidence="1">Binds 2 nickel ions per subunit.</text>
</comment>
<comment type="pathway">
    <text evidence="1">Nitrogen metabolism; urea degradation; CO(2) and NH(3) from urea (urease route): step 1/1.</text>
</comment>
<comment type="subunit">
    <text evidence="1">Heterotrimer of UreA (gamma), UreB (beta) and UreC (alpha) subunits. Three heterotrimers associate to form the active enzyme.</text>
</comment>
<comment type="subcellular location">
    <subcellularLocation>
        <location evidence="1">Cytoplasm</location>
    </subcellularLocation>
</comment>
<comment type="PTM">
    <text evidence="1">Carboxylation allows a single lysine to coordinate two nickel ions.</text>
</comment>
<comment type="similarity">
    <text evidence="1">Belongs to the metallo-dependent hydrolases superfamily. Urease alpha subunit family.</text>
</comment>
<gene>
    <name evidence="1" type="primary">ureC</name>
    <name type="ordered locus">pNG7124</name>
</gene>
<proteinExistence type="inferred from homology"/>
<protein>
    <recommendedName>
        <fullName evidence="1">Urease subunit alpha</fullName>
        <ecNumber evidence="1">3.5.1.5</ecNumber>
    </recommendedName>
    <alternativeName>
        <fullName evidence="1">Urea amidohydrolase subunit alpha</fullName>
    </alternativeName>
</protein>